<feature type="chain" id="PRO_0000162573" description="Global transcriptional regulator Spx">
    <location>
        <begin position="1"/>
        <end position="137"/>
    </location>
</feature>
<feature type="disulfide bond" description="Redox-active" evidence="1">
    <location>
        <begin position="10"/>
        <end position="13"/>
    </location>
</feature>
<name>SPX_STRA5</name>
<dbReference type="EMBL" id="AE009948">
    <property type="protein sequence ID" value="AAM99879.1"/>
    <property type="molecule type" value="Genomic_DNA"/>
</dbReference>
<dbReference type="RefSeq" id="NP_688007.1">
    <property type="nucleotide sequence ID" value="NC_004116.1"/>
</dbReference>
<dbReference type="RefSeq" id="WP_000631264.1">
    <property type="nucleotide sequence ID" value="NC_004116.1"/>
</dbReference>
<dbReference type="SMR" id="Q8DZV0"/>
<dbReference type="STRING" id="208435.SAG0996"/>
<dbReference type="KEGG" id="sag:SAG0996"/>
<dbReference type="PATRIC" id="fig|208435.3.peg.1003"/>
<dbReference type="HOGENOM" id="CLU_116644_1_1_9"/>
<dbReference type="OrthoDB" id="9794155at2"/>
<dbReference type="Proteomes" id="UP000000821">
    <property type="component" value="Chromosome"/>
</dbReference>
<dbReference type="GO" id="GO:0005737">
    <property type="term" value="C:cytoplasm"/>
    <property type="evidence" value="ECO:0007669"/>
    <property type="project" value="UniProtKB-SubCell"/>
</dbReference>
<dbReference type="GO" id="GO:0045892">
    <property type="term" value="P:negative regulation of DNA-templated transcription"/>
    <property type="evidence" value="ECO:0007669"/>
    <property type="project" value="InterPro"/>
</dbReference>
<dbReference type="CDD" id="cd03032">
    <property type="entry name" value="ArsC_Spx"/>
    <property type="match status" value="1"/>
</dbReference>
<dbReference type="Gene3D" id="3.40.30.10">
    <property type="entry name" value="Glutaredoxin"/>
    <property type="match status" value="1"/>
</dbReference>
<dbReference type="HAMAP" id="MF_01132">
    <property type="entry name" value="Spx"/>
    <property type="match status" value="1"/>
</dbReference>
<dbReference type="InterPro" id="IPR006660">
    <property type="entry name" value="Arsenate_reductase-like"/>
</dbReference>
<dbReference type="InterPro" id="IPR023731">
    <property type="entry name" value="Spx"/>
</dbReference>
<dbReference type="InterPro" id="IPR036249">
    <property type="entry name" value="Thioredoxin-like_sf"/>
</dbReference>
<dbReference type="InterPro" id="IPR006504">
    <property type="entry name" value="Tscrpt_reg_Spx/MgsR"/>
</dbReference>
<dbReference type="NCBIfam" id="TIGR01617">
    <property type="entry name" value="arsC_related"/>
    <property type="match status" value="1"/>
</dbReference>
<dbReference type="NCBIfam" id="NF002459">
    <property type="entry name" value="PRK01655.1"/>
    <property type="match status" value="1"/>
</dbReference>
<dbReference type="PANTHER" id="PTHR30041">
    <property type="entry name" value="ARSENATE REDUCTASE"/>
    <property type="match status" value="1"/>
</dbReference>
<dbReference type="PANTHER" id="PTHR30041:SF7">
    <property type="entry name" value="GLOBAL TRANSCRIPTIONAL REGULATOR SPX"/>
    <property type="match status" value="1"/>
</dbReference>
<dbReference type="Pfam" id="PF03960">
    <property type="entry name" value="ArsC"/>
    <property type="match status" value="1"/>
</dbReference>
<dbReference type="SUPFAM" id="SSF52833">
    <property type="entry name" value="Thioredoxin-like"/>
    <property type="match status" value="1"/>
</dbReference>
<dbReference type="PROSITE" id="PS51353">
    <property type="entry name" value="ARSC"/>
    <property type="match status" value="1"/>
</dbReference>
<gene>
    <name evidence="1" type="primary">spx</name>
    <name type="ordered locus">SAG0996</name>
</gene>
<sequence length="137" mass="15846">MITLFLSPSCTSCRKARAWLSKHEVAFEEHNIITSPLNKEELLQILSFTENGTEDIISTRSKVFQKLAIDVDELSTSSLMELISENPSLLRRPIILDKKRMQIGFNEDEIRAFLPRDYRKQELKQATIRAEIEGKHD</sequence>
<evidence type="ECO:0000255" key="1">
    <source>
        <dbReference type="HAMAP-Rule" id="MF_01132"/>
    </source>
</evidence>
<organism>
    <name type="scientific">Streptococcus agalactiae serotype V (strain ATCC BAA-611 / 2603 V/R)</name>
    <dbReference type="NCBI Taxonomy" id="208435"/>
    <lineage>
        <taxon>Bacteria</taxon>
        <taxon>Bacillati</taxon>
        <taxon>Bacillota</taxon>
        <taxon>Bacilli</taxon>
        <taxon>Lactobacillales</taxon>
        <taxon>Streptococcaceae</taxon>
        <taxon>Streptococcus</taxon>
    </lineage>
</organism>
<comment type="function">
    <text evidence="1">Global transcriptional regulator that plays a key role in stress response and exerts either positive or negative regulation of genes. Acts by interacting with the C-terminal domain of the alpha subunit of the RNA polymerase (RNAP). This interaction can enhance binding of RNAP to the promoter region of target genes and stimulate their transcription, or block interaction of RNAP with activator.</text>
</comment>
<comment type="subunit">
    <text evidence="1">Interacts with the C-terminal domain of the alpha subunit of the RNAP.</text>
</comment>
<comment type="subcellular location">
    <subcellularLocation>
        <location evidence="1">Cytoplasm</location>
    </subcellularLocation>
</comment>
<comment type="similarity">
    <text evidence="1">Belongs to the ArsC family. Spx subfamily.</text>
</comment>
<protein>
    <recommendedName>
        <fullName evidence="1">Global transcriptional regulator Spx</fullName>
    </recommendedName>
</protein>
<accession>Q8DZV0</accession>
<proteinExistence type="inferred from homology"/>
<reference key="1">
    <citation type="journal article" date="2002" name="Proc. Natl. Acad. Sci. U.S.A.">
        <title>Complete genome sequence and comparative genomic analysis of an emerging human pathogen, serotype V Streptococcus agalactiae.</title>
        <authorList>
            <person name="Tettelin H."/>
            <person name="Masignani V."/>
            <person name="Cieslewicz M.J."/>
            <person name="Eisen J.A."/>
            <person name="Peterson S.N."/>
            <person name="Wessels M.R."/>
            <person name="Paulsen I.T."/>
            <person name="Nelson K.E."/>
            <person name="Margarit I."/>
            <person name="Read T.D."/>
            <person name="Madoff L.C."/>
            <person name="Wolf A.M."/>
            <person name="Beanan M.J."/>
            <person name="Brinkac L.M."/>
            <person name="Daugherty S.C."/>
            <person name="DeBoy R.T."/>
            <person name="Durkin A.S."/>
            <person name="Kolonay J.F."/>
            <person name="Madupu R."/>
            <person name="Lewis M.R."/>
            <person name="Radune D."/>
            <person name="Fedorova N.B."/>
            <person name="Scanlan D."/>
            <person name="Khouri H.M."/>
            <person name="Mulligan S."/>
            <person name="Carty H.A."/>
            <person name="Cline R.T."/>
            <person name="Van Aken S.E."/>
            <person name="Gill J."/>
            <person name="Scarselli M."/>
            <person name="Mora M."/>
            <person name="Iacobini E.T."/>
            <person name="Brettoni C."/>
            <person name="Galli G."/>
            <person name="Mariani M."/>
            <person name="Vegni F."/>
            <person name="Maione D."/>
            <person name="Rinaudo D."/>
            <person name="Rappuoli R."/>
            <person name="Telford J.L."/>
            <person name="Kasper D.L."/>
            <person name="Grandi G."/>
            <person name="Fraser C.M."/>
        </authorList>
    </citation>
    <scope>NUCLEOTIDE SEQUENCE [LARGE SCALE GENOMIC DNA]</scope>
    <source>
        <strain>ATCC BAA-611 / 2603 V/R</strain>
    </source>
</reference>
<keyword id="KW-0963">Cytoplasm</keyword>
<keyword id="KW-1015">Disulfide bond</keyword>
<keyword id="KW-0676">Redox-active center</keyword>
<keyword id="KW-1185">Reference proteome</keyword>
<keyword id="KW-0804">Transcription</keyword>
<keyword id="KW-0805">Transcription regulation</keyword>